<protein>
    <recommendedName>
        <fullName evidence="1">Small ribosomal subunit protein uS14</fullName>
    </recommendedName>
    <alternativeName>
        <fullName evidence="2">30S ribosomal protein S14</fullName>
    </alternativeName>
</protein>
<gene>
    <name evidence="1" type="primary">rpsN</name>
    <name evidence="1" type="synonym">rps14</name>
    <name type="ordered locus">P9215_14041</name>
</gene>
<comment type="function">
    <text evidence="1">Binds 16S rRNA, required for the assembly of 30S particles and may also be responsible for determining the conformation of the 16S rRNA at the A site.</text>
</comment>
<comment type="subunit">
    <text evidence="1">Part of the 30S ribosomal subunit. Contacts proteins S3 and S10.</text>
</comment>
<comment type="similarity">
    <text evidence="1">Belongs to the universal ribosomal protein uS14 family.</text>
</comment>
<sequence length="100" mass="11642">MAKKSMIAREVKRKKLVKKYAAKRKSLLDEFNAAKDPMERLEIHRKIQGLPRNSAPNRVRNRCWATGKPRGVYRDFGLCRNQLRQRAHNGELPGVVKSSW</sequence>
<proteinExistence type="inferred from homology"/>
<feature type="chain" id="PRO_1000128498" description="Small ribosomal subunit protein uS14">
    <location>
        <begin position="1"/>
        <end position="100"/>
    </location>
</feature>
<name>RS14_PROM2</name>
<dbReference type="EMBL" id="CP000825">
    <property type="protein sequence ID" value="ABV51019.1"/>
    <property type="molecule type" value="Genomic_DNA"/>
</dbReference>
<dbReference type="RefSeq" id="WP_012008067.1">
    <property type="nucleotide sequence ID" value="NC_009840.1"/>
</dbReference>
<dbReference type="SMR" id="A8G5Y8"/>
<dbReference type="STRING" id="93060.P9215_14041"/>
<dbReference type="KEGG" id="pmh:P9215_14041"/>
<dbReference type="eggNOG" id="COG0199">
    <property type="taxonomic scope" value="Bacteria"/>
</dbReference>
<dbReference type="HOGENOM" id="CLU_139869_0_1_3"/>
<dbReference type="OrthoDB" id="9810484at2"/>
<dbReference type="Proteomes" id="UP000002014">
    <property type="component" value="Chromosome"/>
</dbReference>
<dbReference type="GO" id="GO:0005737">
    <property type="term" value="C:cytoplasm"/>
    <property type="evidence" value="ECO:0007669"/>
    <property type="project" value="UniProtKB-ARBA"/>
</dbReference>
<dbReference type="GO" id="GO:0015935">
    <property type="term" value="C:small ribosomal subunit"/>
    <property type="evidence" value="ECO:0007669"/>
    <property type="project" value="TreeGrafter"/>
</dbReference>
<dbReference type="GO" id="GO:0019843">
    <property type="term" value="F:rRNA binding"/>
    <property type="evidence" value="ECO:0007669"/>
    <property type="project" value="UniProtKB-UniRule"/>
</dbReference>
<dbReference type="GO" id="GO:0003735">
    <property type="term" value="F:structural constituent of ribosome"/>
    <property type="evidence" value="ECO:0007669"/>
    <property type="project" value="InterPro"/>
</dbReference>
<dbReference type="GO" id="GO:0006412">
    <property type="term" value="P:translation"/>
    <property type="evidence" value="ECO:0007669"/>
    <property type="project" value="UniProtKB-UniRule"/>
</dbReference>
<dbReference type="FunFam" id="1.10.287.1480:FF:000001">
    <property type="entry name" value="30S ribosomal protein S14"/>
    <property type="match status" value="1"/>
</dbReference>
<dbReference type="Gene3D" id="1.10.287.1480">
    <property type="match status" value="1"/>
</dbReference>
<dbReference type="HAMAP" id="MF_00537">
    <property type="entry name" value="Ribosomal_uS14_1"/>
    <property type="match status" value="1"/>
</dbReference>
<dbReference type="InterPro" id="IPR001209">
    <property type="entry name" value="Ribosomal_uS14"/>
</dbReference>
<dbReference type="InterPro" id="IPR023036">
    <property type="entry name" value="Ribosomal_uS14_bac/plastid"/>
</dbReference>
<dbReference type="InterPro" id="IPR018271">
    <property type="entry name" value="Ribosomal_uS14_CS"/>
</dbReference>
<dbReference type="NCBIfam" id="NF006477">
    <property type="entry name" value="PRK08881.1"/>
    <property type="match status" value="1"/>
</dbReference>
<dbReference type="PANTHER" id="PTHR19836">
    <property type="entry name" value="30S RIBOSOMAL PROTEIN S14"/>
    <property type="match status" value="1"/>
</dbReference>
<dbReference type="PANTHER" id="PTHR19836:SF19">
    <property type="entry name" value="SMALL RIBOSOMAL SUBUNIT PROTEIN US14M"/>
    <property type="match status" value="1"/>
</dbReference>
<dbReference type="Pfam" id="PF00253">
    <property type="entry name" value="Ribosomal_S14"/>
    <property type="match status" value="1"/>
</dbReference>
<dbReference type="SUPFAM" id="SSF57716">
    <property type="entry name" value="Glucocorticoid receptor-like (DNA-binding domain)"/>
    <property type="match status" value="1"/>
</dbReference>
<dbReference type="PROSITE" id="PS00527">
    <property type="entry name" value="RIBOSOMAL_S14"/>
    <property type="match status" value="1"/>
</dbReference>
<reference key="1">
    <citation type="journal article" date="2007" name="PLoS Genet.">
        <title>Patterns and implications of gene gain and loss in the evolution of Prochlorococcus.</title>
        <authorList>
            <person name="Kettler G.C."/>
            <person name="Martiny A.C."/>
            <person name="Huang K."/>
            <person name="Zucker J."/>
            <person name="Coleman M.L."/>
            <person name="Rodrigue S."/>
            <person name="Chen F."/>
            <person name="Lapidus A."/>
            <person name="Ferriera S."/>
            <person name="Johnson J."/>
            <person name="Steglich C."/>
            <person name="Church G.M."/>
            <person name="Richardson P."/>
            <person name="Chisholm S.W."/>
        </authorList>
    </citation>
    <scope>NUCLEOTIDE SEQUENCE [LARGE SCALE GENOMIC DNA]</scope>
    <source>
        <strain>MIT 9215</strain>
    </source>
</reference>
<organism>
    <name type="scientific">Prochlorococcus marinus (strain MIT 9215)</name>
    <dbReference type="NCBI Taxonomy" id="93060"/>
    <lineage>
        <taxon>Bacteria</taxon>
        <taxon>Bacillati</taxon>
        <taxon>Cyanobacteriota</taxon>
        <taxon>Cyanophyceae</taxon>
        <taxon>Synechococcales</taxon>
        <taxon>Prochlorococcaceae</taxon>
        <taxon>Prochlorococcus</taxon>
    </lineage>
</organism>
<keyword id="KW-0687">Ribonucleoprotein</keyword>
<keyword id="KW-0689">Ribosomal protein</keyword>
<keyword id="KW-0694">RNA-binding</keyword>
<keyword id="KW-0699">rRNA-binding</keyword>
<accession>A8G5Y8</accession>
<evidence type="ECO:0000255" key="1">
    <source>
        <dbReference type="HAMAP-Rule" id="MF_00537"/>
    </source>
</evidence>
<evidence type="ECO:0000305" key="2"/>